<proteinExistence type="inferred from homology"/>
<gene>
    <name evidence="1" type="primary">rplM</name>
    <name type="ordered locus">CJA_2787</name>
</gene>
<name>RL13_CELJU</name>
<feature type="chain" id="PRO_1000144102" description="Large ribosomal subunit protein uL13">
    <location>
        <begin position="1"/>
        <end position="142"/>
    </location>
</feature>
<comment type="function">
    <text evidence="1">This protein is one of the early assembly proteins of the 50S ribosomal subunit, although it is not seen to bind rRNA by itself. It is important during the early stages of 50S assembly.</text>
</comment>
<comment type="subunit">
    <text evidence="1">Part of the 50S ribosomal subunit.</text>
</comment>
<comment type="similarity">
    <text evidence="1">Belongs to the universal ribosomal protein uL13 family.</text>
</comment>
<keyword id="KW-1185">Reference proteome</keyword>
<keyword id="KW-0687">Ribonucleoprotein</keyword>
<keyword id="KW-0689">Ribosomal protein</keyword>
<protein>
    <recommendedName>
        <fullName evidence="1">Large ribosomal subunit protein uL13</fullName>
    </recommendedName>
    <alternativeName>
        <fullName evidence="2">50S ribosomal protein L13</fullName>
    </alternativeName>
</protein>
<sequence>MKTYVAKPESVVHDWFIVDAAGKTLGRLSAEIASRLRGKHKPEFTPHVDTGDYIIVINAAKVRVTGNKATDKVYYHHTNFAGGIKSITFDKLIEKAPERTIQTAVKGMLPKGPLGYAMFKKLKVYAGAEHPHAAQQPKELNI</sequence>
<reference key="1">
    <citation type="journal article" date="2008" name="J. Bacteriol.">
        <title>Insights into plant cell wall degradation from the genome sequence of the soil bacterium Cellvibrio japonicus.</title>
        <authorList>
            <person name="DeBoy R.T."/>
            <person name="Mongodin E.F."/>
            <person name="Fouts D.E."/>
            <person name="Tailford L.E."/>
            <person name="Khouri H."/>
            <person name="Emerson J.B."/>
            <person name="Mohamoud Y."/>
            <person name="Watkins K."/>
            <person name="Henrissat B."/>
            <person name="Gilbert H.J."/>
            <person name="Nelson K.E."/>
        </authorList>
    </citation>
    <scope>NUCLEOTIDE SEQUENCE [LARGE SCALE GENOMIC DNA]</scope>
    <source>
        <strain>Ueda107</strain>
    </source>
</reference>
<organism>
    <name type="scientific">Cellvibrio japonicus (strain Ueda107)</name>
    <name type="common">Pseudomonas fluorescens subsp. cellulosa</name>
    <dbReference type="NCBI Taxonomy" id="498211"/>
    <lineage>
        <taxon>Bacteria</taxon>
        <taxon>Pseudomonadati</taxon>
        <taxon>Pseudomonadota</taxon>
        <taxon>Gammaproteobacteria</taxon>
        <taxon>Cellvibrionales</taxon>
        <taxon>Cellvibrionaceae</taxon>
        <taxon>Cellvibrio</taxon>
    </lineage>
</organism>
<accession>B3PBM0</accession>
<dbReference type="EMBL" id="CP000934">
    <property type="protein sequence ID" value="ACE86151.1"/>
    <property type="molecule type" value="Genomic_DNA"/>
</dbReference>
<dbReference type="RefSeq" id="WP_012488381.1">
    <property type="nucleotide sequence ID" value="NC_010995.1"/>
</dbReference>
<dbReference type="SMR" id="B3PBM0"/>
<dbReference type="STRING" id="498211.CJA_2787"/>
<dbReference type="KEGG" id="cja:CJA_2787"/>
<dbReference type="eggNOG" id="COG0102">
    <property type="taxonomic scope" value="Bacteria"/>
</dbReference>
<dbReference type="HOGENOM" id="CLU_082184_2_2_6"/>
<dbReference type="OrthoDB" id="9801330at2"/>
<dbReference type="Proteomes" id="UP000001036">
    <property type="component" value="Chromosome"/>
</dbReference>
<dbReference type="GO" id="GO:0022625">
    <property type="term" value="C:cytosolic large ribosomal subunit"/>
    <property type="evidence" value="ECO:0007669"/>
    <property type="project" value="TreeGrafter"/>
</dbReference>
<dbReference type="GO" id="GO:0003729">
    <property type="term" value="F:mRNA binding"/>
    <property type="evidence" value="ECO:0007669"/>
    <property type="project" value="TreeGrafter"/>
</dbReference>
<dbReference type="GO" id="GO:0003735">
    <property type="term" value="F:structural constituent of ribosome"/>
    <property type="evidence" value="ECO:0007669"/>
    <property type="project" value="InterPro"/>
</dbReference>
<dbReference type="GO" id="GO:0017148">
    <property type="term" value="P:negative regulation of translation"/>
    <property type="evidence" value="ECO:0007669"/>
    <property type="project" value="TreeGrafter"/>
</dbReference>
<dbReference type="GO" id="GO:0006412">
    <property type="term" value="P:translation"/>
    <property type="evidence" value="ECO:0007669"/>
    <property type="project" value="UniProtKB-UniRule"/>
</dbReference>
<dbReference type="CDD" id="cd00392">
    <property type="entry name" value="Ribosomal_L13"/>
    <property type="match status" value="1"/>
</dbReference>
<dbReference type="FunFam" id="3.90.1180.10:FF:000001">
    <property type="entry name" value="50S ribosomal protein L13"/>
    <property type="match status" value="1"/>
</dbReference>
<dbReference type="Gene3D" id="3.90.1180.10">
    <property type="entry name" value="Ribosomal protein L13"/>
    <property type="match status" value="1"/>
</dbReference>
<dbReference type="HAMAP" id="MF_01366">
    <property type="entry name" value="Ribosomal_uL13"/>
    <property type="match status" value="1"/>
</dbReference>
<dbReference type="InterPro" id="IPR005822">
    <property type="entry name" value="Ribosomal_uL13"/>
</dbReference>
<dbReference type="InterPro" id="IPR005823">
    <property type="entry name" value="Ribosomal_uL13_bac-type"/>
</dbReference>
<dbReference type="InterPro" id="IPR036899">
    <property type="entry name" value="Ribosomal_uL13_sf"/>
</dbReference>
<dbReference type="NCBIfam" id="TIGR01066">
    <property type="entry name" value="rplM_bact"/>
    <property type="match status" value="1"/>
</dbReference>
<dbReference type="PANTHER" id="PTHR11545:SF2">
    <property type="entry name" value="LARGE RIBOSOMAL SUBUNIT PROTEIN UL13M"/>
    <property type="match status" value="1"/>
</dbReference>
<dbReference type="PANTHER" id="PTHR11545">
    <property type="entry name" value="RIBOSOMAL PROTEIN L13"/>
    <property type="match status" value="1"/>
</dbReference>
<dbReference type="Pfam" id="PF00572">
    <property type="entry name" value="Ribosomal_L13"/>
    <property type="match status" value="1"/>
</dbReference>
<dbReference type="PIRSF" id="PIRSF002181">
    <property type="entry name" value="Ribosomal_L13"/>
    <property type="match status" value="1"/>
</dbReference>
<dbReference type="SUPFAM" id="SSF52161">
    <property type="entry name" value="Ribosomal protein L13"/>
    <property type="match status" value="1"/>
</dbReference>
<evidence type="ECO:0000255" key="1">
    <source>
        <dbReference type="HAMAP-Rule" id="MF_01366"/>
    </source>
</evidence>
<evidence type="ECO:0000305" key="2"/>